<sequence length="278" mass="29835">MHSQHRTARIALAVVLTAIPASLATAGVGYASTQASTAVKAGAGLDDPHKKEIAMELVSSAENSSLDWKAQYKYIEDIGDGRGYTGGIIGFCSGTGDMLELVQHYTDLEPGNILAKYLPALKKVNGSASHSGLGTPFTKDWATAAKDTVFQQAQNDERDRVYFDPAVSQAKADGLRALGQFAYYDAIVMHGPGNDPTSFGGIRKTAMKKARTPAQGGDETTYLNAFLDARKAAMLTEAAHDDTSRVDTEQRVFLKAGNLDLNPPLKWKTYGDPYVINS</sequence>
<gene>
    <name type="primary">csn</name>
    <name type="synonym">chs</name>
</gene>
<organism>
    <name type="scientific">Streptomyces sp. (strain N174)</name>
    <dbReference type="NCBI Taxonomy" id="69019"/>
    <lineage>
        <taxon>Bacteria</taxon>
        <taxon>Bacillati</taxon>
        <taxon>Actinomycetota</taxon>
        <taxon>Actinomycetes</taxon>
        <taxon>Kitasatosporales</taxon>
        <taxon>Streptomycetaceae</taxon>
        <taxon>Streptomyces</taxon>
    </lineage>
</organism>
<keyword id="KW-0002">3D-structure</keyword>
<keyword id="KW-0903">Direct protein sequencing</keyword>
<keyword id="KW-0326">Glycosidase</keyword>
<keyword id="KW-0378">Hydrolase</keyword>
<keyword id="KW-0964">Secreted</keyword>
<keyword id="KW-0732">Signal</keyword>
<name>CHIS_STRSN</name>
<reference key="1">
    <citation type="journal article" date="1994" name="Gene">
        <title>Primary sequence of the chitosanase from Streptomyces sp. strain N174 and comparison with other endoglycosidases.</title>
        <authorList>
            <person name="Masson J.-Y."/>
            <person name="Denis F."/>
            <person name="Brzezinski R."/>
        </authorList>
    </citation>
    <scope>NUCLEOTIDE SEQUENCE [GENOMIC DNA]</scope>
</reference>
<reference key="2">
    <citation type="journal article" date="1992" name="Appl. Microbiol. Biotechnol.">
        <title>Purification and characterization of a chitosanase from Streptomyces N174.</title>
        <authorList>
            <person name="Boucher I."/>
            <person name="Dupuy A."/>
            <person name="Vidal P."/>
            <person name="Neugebauer W.A."/>
            <person name="Brzezinski R."/>
        </authorList>
    </citation>
    <scope>PROTEIN SEQUENCE OF 41-57</scope>
    <scope>CHARACTERIZATION</scope>
</reference>
<reference key="3">
    <citation type="journal article" date="1991" name="Biotechnol. Lett.">
        <title>Cloning and expression in Streptomyces lividans of a chitanase-encoding gene from the actinomycete Kitasatosporia N174 isolated from soil.</title>
        <authorList>
            <person name="Fink D."/>
            <person name="Boucher I."/>
            <person name="Denis F."/>
            <person name="Brzezinski R."/>
        </authorList>
    </citation>
    <scope>CHARACTERIZATION</scope>
</reference>
<reference key="4">
    <citation type="journal article" date="1995" name="Biochem. J.">
        <title>Reaction mechanism of chitosanase from Streptomyces sp. N174.</title>
        <authorList>
            <person name="Fukamizo T."/>
            <person name="Honda Y."/>
            <person name="Goto S."/>
            <person name="Boucher I."/>
            <person name="Brzezinski R."/>
        </authorList>
    </citation>
    <scope>CHARACTERIZATION</scope>
</reference>
<reference key="5">
    <citation type="journal article" date="1995" name="J. Biol. Chem.">
        <title>Site-directed mutagenesis of evolutionary conserved carboxylic amino acids in the chitosanase from Streptomyces sp. N174 reveals two residues essential for catalysis.</title>
        <authorList>
            <person name="Boucher I."/>
            <person name="Fukamizo T."/>
            <person name="Honda Y."/>
            <person name="Willick G.E."/>
            <person name="Neugebauer W.A."/>
            <person name="Brzezinski R."/>
        </authorList>
    </citation>
    <scope>MUTAGENESIS</scope>
</reference>
<reference key="6">
    <citation type="journal article" date="1996" name="Nat. Struct. Biol.">
        <title>X-ray structure of an anti-fungal chitosanase from streptomyces N174.</title>
        <authorList>
            <person name="Marcotte E.M."/>
            <person name="Monzingo A.F."/>
            <person name="Ernst S.R."/>
            <person name="Brzezinski R."/>
            <person name="Robertus J.D."/>
        </authorList>
    </citation>
    <scope>X-RAY CRYSTALLOGRAPHY (2.4 ANGSTROMS)</scope>
</reference>
<comment type="function">
    <text>Aids in the defense against invading fungal pathogens by degrading their cell wall chitosan.</text>
</comment>
<comment type="catalytic activity">
    <reaction>
        <text>Endohydrolysis of beta-(1-&gt;4)-linkages between D-glucosamine residues in a partly acetylated chitosan.</text>
        <dbReference type="EC" id="3.2.1.132"/>
    </reaction>
</comment>
<comment type="subcellular location">
    <subcellularLocation>
        <location>Secreted</location>
    </subcellularLocation>
</comment>
<comment type="similarity">
    <text evidence="3">Belongs to the glycosyl hydrolase 46 family.</text>
</comment>
<protein>
    <recommendedName>
        <fullName>Chitosanase</fullName>
        <ecNumber>3.2.1.132</ecNumber>
    </recommendedName>
</protein>
<evidence type="ECO:0000269" key="1">
    <source>
    </source>
</evidence>
<evidence type="ECO:0000269" key="2">
    <source ref="2"/>
</evidence>
<evidence type="ECO:0000305" key="3"/>
<evidence type="ECO:0007829" key="4">
    <source>
        <dbReference type="PDB" id="1CHK"/>
    </source>
</evidence>
<feature type="signal peptide" evidence="2">
    <location>
        <begin position="1"/>
        <end position="40"/>
    </location>
</feature>
<feature type="chain" id="PRO_0000012209" description="Chitosanase">
    <location>
        <begin position="41"/>
        <end position="278"/>
    </location>
</feature>
<feature type="active site" description="Proton donor">
    <location>
        <position position="62"/>
    </location>
</feature>
<feature type="active site" description="Nucleophile">
    <location>
        <position position="80"/>
    </location>
</feature>
<feature type="mutagenesis site" description="Drastic reduction of activity." evidence="1">
    <original>E</original>
    <variation>D</variation>
    <variation>Q</variation>
    <location>
        <position position="62"/>
    </location>
</feature>
<feature type="mutagenesis site" description="Drastic reduction of activity." evidence="1">
    <original>D</original>
    <variation>E</variation>
    <variation>N</variation>
    <location>
        <position position="80"/>
    </location>
</feature>
<feature type="helix" evidence="4">
    <location>
        <begin position="44"/>
        <end position="46"/>
    </location>
</feature>
<feature type="helix" evidence="4">
    <location>
        <begin position="48"/>
        <end position="62"/>
    </location>
</feature>
<feature type="strand" evidence="4">
    <location>
        <begin position="63"/>
        <end position="66"/>
    </location>
</feature>
<feature type="helix" evidence="4">
    <location>
        <begin position="68"/>
        <end position="71"/>
    </location>
</feature>
<feature type="strand" evidence="4">
    <location>
        <begin position="75"/>
        <end position="77"/>
    </location>
</feature>
<feature type="strand" evidence="4">
    <location>
        <begin position="79"/>
        <end position="82"/>
    </location>
</feature>
<feature type="strand" evidence="4">
    <location>
        <begin position="84"/>
        <end position="86"/>
    </location>
</feature>
<feature type="turn" evidence="4">
    <location>
        <begin position="87"/>
        <end position="90"/>
    </location>
</feature>
<feature type="turn" evidence="4">
    <location>
        <begin position="93"/>
        <end position="95"/>
    </location>
</feature>
<feature type="helix" evidence="4">
    <location>
        <begin position="97"/>
        <end position="108"/>
    </location>
</feature>
<feature type="helix" evidence="4">
    <location>
        <begin position="115"/>
        <end position="117"/>
    </location>
</feature>
<feature type="helix" evidence="4">
    <location>
        <begin position="118"/>
        <end position="124"/>
    </location>
</feature>
<feature type="helix" evidence="4">
    <location>
        <begin position="134"/>
        <end position="144"/>
    </location>
</feature>
<feature type="helix" evidence="4">
    <location>
        <begin position="148"/>
        <end position="161"/>
    </location>
</feature>
<feature type="helix" evidence="4">
    <location>
        <begin position="163"/>
        <end position="172"/>
    </location>
</feature>
<feature type="helix" evidence="4">
    <location>
        <begin position="177"/>
        <end position="190"/>
    </location>
</feature>
<feature type="strand" evidence="4">
    <location>
        <begin position="192"/>
        <end position="195"/>
    </location>
</feature>
<feature type="helix" evidence="4">
    <location>
        <begin position="199"/>
        <end position="209"/>
    </location>
</feature>
<feature type="helix" evidence="4">
    <location>
        <begin position="213"/>
        <end position="215"/>
    </location>
</feature>
<feature type="helix" evidence="4">
    <location>
        <begin position="219"/>
        <end position="236"/>
    </location>
</feature>
<feature type="helix" evidence="4">
    <location>
        <begin position="244"/>
        <end position="247"/>
    </location>
</feature>
<feature type="helix" evidence="4">
    <location>
        <begin position="250"/>
        <end position="255"/>
    </location>
</feature>
<feature type="strand" evidence="4">
    <location>
        <begin position="265"/>
        <end position="269"/>
    </location>
</feature>
<feature type="strand" evidence="4">
    <location>
        <begin position="272"/>
        <end position="276"/>
    </location>
</feature>
<dbReference type="EC" id="3.2.1.132"/>
<dbReference type="EMBL" id="L07779">
    <property type="protein sequence ID" value="AAA19865.1"/>
    <property type="molecule type" value="Genomic_DNA"/>
</dbReference>
<dbReference type="PDB" id="1CHK">
    <property type="method" value="X-ray"/>
    <property type="resolution" value="2.40 A"/>
    <property type="chains" value="A/B=41-278"/>
</dbReference>
<dbReference type="PDBsum" id="1CHK"/>
<dbReference type="BMRB" id="P33665"/>
<dbReference type="SMR" id="P33665"/>
<dbReference type="CAZy" id="GH46">
    <property type="family name" value="Glycoside Hydrolase Family 46"/>
</dbReference>
<dbReference type="BRENDA" id="3.2.1.132">
    <property type="organism ID" value="1284"/>
</dbReference>
<dbReference type="SABIO-RK" id="P33665"/>
<dbReference type="EvolutionaryTrace" id="P33665"/>
<dbReference type="GO" id="GO:0005576">
    <property type="term" value="C:extracellular region"/>
    <property type="evidence" value="ECO:0007669"/>
    <property type="project" value="UniProtKB-SubCell"/>
</dbReference>
<dbReference type="GO" id="GO:0016977">
    <property type="term" value="F:chitosanase activity"/>
    <property type="evidence" value="ECO:0007669"/>
    <property type="project" value="UniProtKB-EC"/>
</dbReference>
<dbReference type="GO" id="GO:0005975">
    <property type="term" value="P:carbohydrate metabolic process"/>
    <property type="evidence" value="ECO:0007669"/>
    <property type="project" value="InterPro"/>
</dbReference>
<dbReference type="CDD" id="cd00978">
    <property type="entry name" value="chitosanase_GH46"/>
    <property type="match status" value="1"/>
</dbReference>
<dbReference type="Gene3D" id="1.20.141.10">
    <property type="entry name" value="Chitosanase, subunit A, domain 1"/>
    <property type="match status" value="1"/>
</dbReference>
<dbReference type="Gene3D" id="3.30.386.10">
    <property type="entry name" value="Chitosanase, subunit A, domain 2"/>
    <property type="match status" value="1"/>
</dbReference>
<dbReference type="InterPro" id="IPR000400">
    <property type="entry name" value="Glyco_hydro_46"/>
</dbReference>
<dbReference type="InterPro" id="IPR023099">
    <property type="entry name" value="Glyco_hydro_46_N"/>
</dbReference>
<dbReference type="InterPro" id="IPR023346">
    <property type="entry name" value="Lysozyme-like_dom_sf"/>
</dbReference>
<dbReference type="Pfam" id="PF01374">
    <property type="entry name" value="Glyco_hydro_46"/>
    <property type="match status" value="1"/>
</dbReference>
<dbReference type="PIRSF" id="PIRSF036551">
    <property type="entry name" value="Chitosanase"/>
    <property type="match status" value="1"/>
</dbReference>
<dbReference type="SUPFAM" id="SSF53955">
    <property type="entry name" value="Lysozyme-like"/>
    <property type="match status" value="1"/>
</dbReference>
<dbReference type="PROSITE" id="PS60000">
    <property type="entry name" value="CHITOSANASE_46_80"/>
    <property type="match status" value="1"/>
</dbReference>
<proteinExistence type="evidence at protein level"/>
<accession>P33665</accession>